<comment type="catalytic activity">
    <reaction>
        <text>L-seryl-[protein] + ATP = O-phospho-L-seryl-[protein] + ADP + H(+)</text>
        <dbReference type="Rhea" id="RHEA:17989"/>
        <dbReference type="Rhea" id="RHEA-COMP:9863"/>
        <dbReference type="Rhea" id="RHEA-COMP:11604"/>
        <dbReference type="ChEBI" id="CHEBI:15378"/>
        <dbReference type="ChEBI" id="CHEBI:29999"/>
        <dbReference type="ChEBI" id="CHEBI:30616"/>
        <dbReference type="ChEBI" id="CHEBI:83421"/>
        <dbReference type="ChEBI" id="CHEBI:456216"/>
        <dbReference type="EC" id="2.7.11.1"/>
    </reaction>
</comment>
<comment type="catalytic activity">
    <reaction>
        <text>L-threonyl-[protein] + ATP = O-phospho-L-threonyl-[protein] + ADP + H(+)</text>
        <dbReference type="Rhea" id="RHEA:46608"/>
        <dbReference type="Rhea" id="RHEA-COMP:11060"/>
        <dbReference type="Rhea" id="RHEA-COMP:11605"/>
        <dbReference type="ChEBI" id="CHEBI:15378"/>
        <dbReference type="ChEBI" id="CHEBI:30013"/>
        <dbReference type="ChEBI" id="CHEBI:30616"/>
        <dbReference type="ChEBI" id="CHEBI:61977"/>
        <dbReference type="ChEBI" id="CHEBI:456216"/>
        <dbReference type="EC" id="2.7.11.1"/>
    </reaction>
</comment>
<comment type="miscellaneous">
    <text>This protein is synthesized as a Rmil-Env polyprotein.</text>
</comment>
<comment type="similarity">
    <text evidence="4">Belongs to the protein kinase superfamily. TKL Ser/Thr protein kinase family. RAF subfamily.</text>
</comment>
<accession>P27966</accession>
<organism>
    <name type="scientific">Avian rous-associated virus type 1</name>
    <dbReference type="NCBI Taxonomy" id="11950"/>
    <lineage>
        <taxon>Viruses</taxon>
        <taxon>Riboviria</taxon>
        <taxon>Pararnavirae</taxon>
        <taxon>Artverviricota</taxon>
        <taxon>Revtraviricetes</taxon>
        <taxon>Ortervirales</taxon>
        <taxon>Retroviridae</taxon>
        <taxon>Orthoretrovirinae</taxon>
        <taxon>Alpharetrovirus</taxon>
        <taxon>Avian leukosis virus</taxon>
    </lineage>
</organism>
<sequence length="450" mass="50313">MEAVIKDLIRDQGVRGEGGSTAGLSATPPASLPGSLTNVKALQKSPGPQRERKSSSSSEDRNRMKTLGRRDSSDDWEIPDGQITVGQRIGSGSFGTVYKGKWHGDVAVKMLNVTAPTPQQLQAFKNEVGVLRKTRHVNILLFMGYSTKPQLAIVTQWCEGSSLYHHLHIIETKFEMIKLIDIARQTAQGMDYLHAKSIIHRDLKSNNIFLHEDLTVKIGDFGLATVKSRWSGSHQFEQLSGSILWMAPEVIRMQDKNPYSFQSDVYAFGIVLYELMTGQLPYSNINNRDQIIFMVGRGYLSPDLSKVRSNCPKAMKRLMAECLKKKRDERPLFPQILASIELLARSLPKIHRSASEPSLNRAGFQTEDFSLYACASPKTPIQAGGIGEWAVHLLKGLLLGLVVILLLVVCLPCLLQCVSSSIRKMIDNSLGYREEYKKLQEAYKQPERRA</sequence>
<dbReference type="EC" id="2.7.11.1"/>
<dbReference type="EMBL" id="M62407">
    <property type="protein sequence ID" value="AAA42549.1"/>
    <property type="molecule type" value="Genomic_RNA"/>
</dbReference>
<dbReference type="PIR" id="A40341">
    <property type="entry name" value="TVFVMR"/>
</dbReference>
<dbReference type="SMR" id="P27966"/>
<dbReference type="BRENDA" id="2.7.11.1">
    <property type="organism ID" value="599"/>
</dbReference>
<dbReference type="GO" id="GO:0005886">
    <property type="term" value="C:plasma membrane"/>
    <property type="evidence" value="ECO:0007669"/>
    <property type="project" value="TreeGrafter"/>
</dbReference>
<dbReference type="GO" id="GO:0005524">
    <property type="term" value="F:ATP binding"/>
    <property type="evidence" value="ECO:0007669"/>
    <property type="project" value="UniProtKB-KW"/>
</dbReference>
<dbReference type="GO" id="GO:0106310">
    <property type="term" value="F:protein serine kinase activity"/>
    <property type="evidence" value="ECO:0007669"/>
    <property type="project" value="RHEA"/>
</dbReference>
<dbReference type="GO" id="GO:0004674">
    <property type="term" value="F:protein serine/threonine kinase activity"/>
    <property type="evidence" value="ECO:0007669"/>
    <property type="project" value="UniProtKB-KW"/>
</dbReference>
<dbReference type="CDD" id="cd14062">
    <property type="entry name" value="STKc_Raf"/>
    <property type="match status" value="1"/>
</dbReference>
<dbReference type="FunFam" id="3.30.200.20:FF:000024">
    <property type="entry name" value="B-Raf proto-oncogene serine/threonine-protein kinase"/>
    <property type="match status" value="1"/>
</dbReference>
<dbReference type="FunFam" id="1.10.510.10:FF:000036">
    <property type="entry name" value="RAF proto-oncogene serine/threonine-protein kinase"/>
    <property type="match status" value="1"/>
</dbReference>
<dbReference type="Gene3D" id="3.30.200.20">
    <property type="entry name" value="Phosphorylase Kinase, domain 1"/>
    <property type="match status" value="1"/>
</dbReference>
<dbReference type="Gene3D" id="1.10.510.10">
    <property type="entry name" value="Transferase(Phosphotransferase) domain 1"/>
    <property type="match status" value="1"/>
</dbReference>
<dbReference type="InterPro" id="IPR011009">
    <property type="entry name" value="Kinase-like_dom_sf"/>
</dbReference>
<dbReference type="InterPro" id="IPR000719">
    <property type="entry name" value="Prot_kinase_dom"/>
</dbReference>
<dbReference type="InterPro" id="IPR017441">
    <property type="entry name" value="Protein_kinase_ATP_BS"/>
</dbReference>
<dbReference type="InterPro" id="IPR001245">
    <property type="entry name" value="Ser-Thr/Tyr_kinase_cat_dom"/>
</dbReference>
<dbReference type="InterPro" id="IPR008271">
    <property type="entry name" value="Ser/Thr_kinase_AS"/>
</dbReference>
<dbReference type="InterPro" id="IPR051681">
    <property type="entry name" value="Ser/Thr_Kinases-Pseudokinases"/>
</dbReference>
<dbReference type="PANTHER" id="PTHR44329">
    <property type="entry name" value="SERINE/THREONINE-PROTEIN KINASE TNNI3K-RELATED"/>
    <property type="match status" value="1"/>
</dbReference>
<dbReference type="PANTHER" id="PTHR44329:SF240">
    <property type="entry name" value="SERINE_THREONINE-PROTEIN KINASE B-RAF"/>
    <property type="match status" value="1"/>
</dbReference>
<dbReference type="Pfam" id="PF07714">
    <property type="entry name" value="PK_Tyr_Ser-Thr"/>
    <property type="match status" value="1"/>
</dbReference>
<dbReference type="SMART" id="SM00220">
    <property type="entry name" value="S_TKc"/>
    <property type="match status" value="1"/>
</dbReference>
<dbReference type="SUPFAM" id="SSF56112">
    <property type="entry name" value="Protein kinase-like (PK-like)"/>
    <property type="match status" value="1"/>
</dbReference>
<dbReference type="PROSITE" id="PS00107">
    <property type="entry name" value="PROTEIN_KINASE_ATP"/>
    <property type="match status" value="1"/>
</dbReference>
<dbReference type="PROSITE" id="PS50011">
    <property type="entry name" value="PROTEIN_KINASE_DOM"/>
    <property type="match status" value="1"/>
</dbReference>
<dbReference type="PROSITE" id="PS00108">
    <property type="entry name" value="PROTEIN_KINASE_ST"/>
    <property type="match status" value="1"/>
</dbReference>
<reference key="1">
    <citation type="journal article" date="1991" name="J. Virol.">
        <title>Common mechanism of retrovirus activation and transduction of c-mil and c-Rmil in chicken neuroretina cells infected with Rous-associated virus type 1.</title>
        <authorList>
            <person name="Felder M.-P."/>
            <person name="Eychene A."/>
            <person name="Barnier J.V."/>
            <person name="Calogeraki I."/>
            <person name="Calothy G."/>
            <person name="Marx M."/>
        </authorList>
    </citation>
    <scope>NUCLEOTIDE SEQUENCE [GENOMIC RNA]</scope>
</reference>
<protein>
    <recommendedName>
        <fullName>Serine/threonine-protein kinase-transforming protein Rmil</fullName>
        <ecNumber>2.7.11.1</ecNumber>
    </recommendedName>
</protein>
<feature type="chain" id="PRO_0000086616" description="Serine/threonine-protein kinase-transforming protein Rmil">
    <location>
        <begin position="1"/>
        <end position="450"/>
    </location>
</feature>
<feature type="domain" description="Protein kinase" evidence="1">
    <location>
        <begin position="83"/>
        <end position="343"/>
    </location>
</feature>
<feature type="region of interest" description="Disordered" evidence="3">
    <location>
        <begin position="1"/>
        <end position="80"/>
    </location>
</feature>
<feature type="compositionally biased region" description="Basic and acidic residues" evidence="3">
    <location>
        <begin position="1"/>
        <end position="14"/>
    </location>
</feature>
<feature type="compositionally biased region" description="Basic and acidic residues" evidence="3">
    <location>
        <begin position="49"/>
        <end position="73"/>
    </location>
</feature>
<feature type="active site" description="Proton acceptor" evidence="1 2">
    <location>
        <position position="202"/>
    </location>
</feature>
<feature type="binding site" evidence="1">
    <location>
        <begin position="89"/>
        <end position="97"/>
    </location>
    <ligand>
        <name>ATP</name>
        <dbReference type="ChEBI" id="CHEBI:30616"/>
    </ligand>
</feature>
<feature type="binding site" evidence="1">
    <location>
        <position position="109"/>
    </location>
    <ligand>
        <name>ATP</name>
        <dbReference type="ChEBI" id="CHEBI:30616"/>
    </ligand>
</feature>
<organismHost>
    <name type="scientific">Galliformes</name>
    <dbReference type="NCBI Taxonomy" id="8976"/>
</organismHost>
<proteinExistence type="inferred from homology"/>
<name>RMIL_AVEVR</name>
<keyword id="KW-0067">ATP-binding</keyword>
<keyword id="KW-0418">Kinase</keyword>
<keyword id="KW-0547">Nucleotide-binding</keyword>
<keyword id="KW-0553">Oncogene</keyword>
<keyword id="KW-0723">Serine/threonine-protein kinase</keyword>
<keyword id="KW-0808">Transferase</keyword>
<gene>
    <name type="primary">V-RMIL</name>
</gene>
<evidence type="ECO:0000255" key="1">
    <source>
        <dbReference type="PROSITE-ProRule" id="PRU00159"/>
    </source>
</evidence>
<evidence type="ECO:0000255" key="2">
    <source>
        <dbReference type="PROSITE-ProRule" id="PRU10027"/>
    </source>
</evidence>
<evidence type="ECO:0000256" key="3">
    <source>
        <dbReference type="SAM" id="MobiDB-lite"/>
    </source>
</evidence>
<evidence type="ECO:0000305" key="4"/>